<sequence length="241" mass="26086">MSPPVSVTKMQVENYAFAPTVNPAGSTNTLFLAGAGHRGLEIEGKFVKFTAIGVYLEESAIPFLAEKWKGKTPQELTDSVEFFRDVVTGPFEKFTRVTTILPLTGKQYSEKVAENCVAHWKGIGTYTDDEGRAIEKFLDVFRSETFPPGASIMFTQSPLGLLTISFAKDDSVTGTANAVIENKQLSEAVLESIIGKHGVSPAAKCNVAERVAELLKKSYAEEASVFGKPETEKSTIPVIGV</sequence>
<organism>
    <name type="scientific">Petunia hybrida</name>
    <name type="common">Petunia</name>
    <dbReference type="NCBI Taxonomy" id="4102"/>
    <lineage>
        <taxon>Eukaryota</taxon>
        <taxon>Viridiplantae</taxon>
        <taxon>Streptophyta</taxon>
        <taxon>Embryophyta</taxon>
        <taxon>Tracheophyta</taxon>
        <taxon>Spermatophyta</taxon>
        <taxon>Magnoliopsida</taxon>
        <taxon>eudicotyledons</taxon>
        <taxon>Gunneridae</taxon>
        <taxon>Pentapetalae</taxon>
        <taxon>asterids</taxon>
        <taxon>lamiids</taxon>
        <taxon>Solanales</taxon>
        <taxon>Solanaceae</taxon>
        <taxon>Petunioideae</taxon>
        <taxon>Petunia</taxon>
    </lineage>
</organism>
<protein>
    <recommendedName>
        <fullName>Chalcone--flavanone isomerase C</fullName>
        <shortName>CHI-C</shortName>
        <shortName>Chalcone isomerase C</shortName>
        <ecNumber>5.5.1.6</ecNumber>
    </recommendedName>
</protein>
<accession>Q9M5B3</accession>
<feature type="chain" id="PRO_0000300847" description="Chalcone--flavanone isomerase C">
    <location>
        <begin position="1"/>
        <end position="241"/>
    </location>
</feature>
<feature type="binding site" evidence="1">
    <location>
        <position position="50"/>
    </location>
    <ligand>
        <name>substrate</name>
    </ligand>
</feature>
<feature type="binding site" evidence="1">
    <location>
        <position position="115"/>
    </location>
    <ligand>
        <name>substrate</name>
    </ligand>
</feature>
<feature type="binding site" evidence="1">
    <location>
        <position position="192"/>
    </location>
    <ligand>
        <name>substrate</name>
    </ligand>
</feature>
<feature type="site" description="Important for catalytic activity" evidence="1">
    <location>
        <position position="108"/>
    </location>
</feature>
<proteinExistence type="evidence at transcript level"/>
<comment type="function">
    <text evidence="1">Catalyzes the intramolecular cyclization of bicyclic chalcones into tricyclic (S)-flavanones. Responsible for the isomerization of 4,2',4',6'-tetrahydroxychalcone (also termed chalcone) into naringenin (By similarity).</text>
</comment>
<comment type="catalytic activity">
    <reaction>
        <text>a chalcone = a flavanone.</text>
        <dbReference type="EC" id="5.5.1.6"/>
    </reaction>
</comment>
<comment type="pathway">
    <text>Secondary metabolite biosynthesis; flavonoid biosynthesis.</text>
</comment>
<comment type="miscellaneous">
    <text>Part of the biosynthetic pathway for all classes of flavonoids, a large class of secondary plant metabolites, many of which are brightly colored.</text>
</comment>
<comment type="similarity">
    <text evidence="2">Belongs to the chalcone isomerase family.</text>
</comment>
<name>CFI3_PETHY</name>
<dbReference type="EC" id="5.5.1.6"/>
<dbReference type="EMBL" id="AF233637">
    <property type="protein sequence ID" value="AAF60296.1"/>
    <property type="molecule type" value="mRNA"/>
</dbReference>
<dbReference type="SMR" id="Q9M5B3"/>
<dbReference type="UniPathway" id="UPA00154"/>
<dbReference type="GO" id="GO:0045430">
    <property type="term" value="F:chalcone isomerase activity"/>
    <property type="evidence" value="ECO:0007669"/>
    <property type="project" value="UniProtKB-EC"/>
</dbReference>
<dbReference type="GO" id="GO:0009813">
    <property type="term" value="P:flavonoid biosynthetic process"/>
    <property type="evidence" value="ECO:0007669"/>
    <property type="project" value="UniProtKB-UniPathway"/>
</dbReference>
<dbReference type="Gene3D" id="1.10.890.20">
    <property type="match status" value="1"/>
</dbReference>
<dbReference type="Gene3D" id="3.50.70.10">
    <property type="match status" value="1"/>
</dbReference>
<dbReference type="InterPro" id="IPR044164">
    <property type="entry name" value="CFI"/>
</dbReference>
<dbReference type="InterPro" id="IPR016087">
    <property type="entry name" value="Chalcone_isomerase"/>
</dbReference>
<dbReference type="InterPro" id="IPR016088">
    <property type="entry name" value="Chalcone_isomerase_3-sand"/>
</dbReference>
<dbReference type="InterPro" id="IPR016089">
    <property type="entry name" value="Chalcone_isomerase_bundle_sf"/>
</dbReference>
<dbReference type="InterPro" id="IPR036298">
    <property type="entry name" value="Chalcone_isomerase_sf"/>
</dbReference>
<dbReference type="PANTHER" id="PTHR28039:SF8">
    <property type="entry name" value="CHALCONE--FLAVANONE ISOMERASE 1-RELATED"/>
    <property type="match status" value="1"/>
</dbReference>
<dbReference type="PANTHER" id="PTHR28039">
    <property type="entry name" value="CHALCONE--FLAVONONE ISOMERASE 1-RELATED"/>
    <property type="match status" value="1"/>
</dbReference>
<dbReference type="Pfam" id="PF02431">
    <property type="entry name" value="Chalcone"/>
    <property type="match status" value="1"/>
</dbReference>
<dbReference type="SUPFAM" id="SSF54626">
    <property type="entry name" value="Chalcone isomerase"/>
    <property type="match status" value="1"/>
</dbReference>
<evidence type="ECO:0000250" key="1"/>
<evidence type="ECO:0000305" key="2"/>
<gene>
    <name type="primary">CHI3</name>
    <name type="synonym">CHIC</name>
</gene>
<keyword id="KW-0284">Flavonoid biosynthesis</keyword>
<keyword id="KW-0413">Isomerase</keyword>
<reference key="1">
    <citation type="journal article" date="2003" name="Mol. Breed.">
        <title>Complete sequence of the binary vector pBI121 and its application in cloning T-DNA insertion from transgenic plants.</title>
        <authorList>
            <person name="Chen P.-Y."/>
            <person name="Wang C.-K."/>
            <person name="Soong S.-C."/>
            <person name="To K.-Y."/>
        </authorList>
        <dbReference type="AGRICOLA" id="IND43615199"/>
    </citation>
    <scope>NUCLEOTIDE SEQUENCE [MRNA]</scope>
    <source>
        <tissue>Corolla</tissue>
    </source>
</reference>